<accession>Q3J5W3</accession>
<comment type="function">
    <text evidence="1">Transfers the 4'-phosphopantetheine moiety from coenzyme A to a Ser of acyl-carrier-protein.</text>
</comment>
<comment type="catalytic activity">
    <reaction evidence="1">
        <text>apo-[ACP] + CoA = holo-[ACP] + adenosine 3',5'-bisphosphate + H(+)</text>
        <dbReference type="Rhea" id="RHEA:12068"/>
        <dbReference type="Rhea" id="RHEA-COMP:9685"/>
        <dbReference type="Rhea" id="RHEA-COMP:9690"/>
        <dbReference type="ChEBI" id="CHEBI:15378"/>
        <dbReference type="ChEBI" id="CHEBI:29999"/>
        <dbReference type="ChEBI" id="CHEBI:57287"/>
        <dbReference type="ChEBI" id="CHEBI:58343"/>
        <dbReference type="ChEBI" id="CHEBI:64479"/>
        <dbReference type="EC" id="2.7.8.7"/>
    </reaction>
</comment>
<comment type="cofactor">
    <cofactor evidence="1">
        <name>Mg(2+)</name>
        <dbReference type="ChEBI" id="CHEBI:18420"/>
    </cofactor>
</comment>
<comment type="subcellular location">
    <subcellularLocation>
        <location evidence="1">Cytoplasm</location>
    </subcellularLocation>
</comment>
<comment type="similarity">
    <text evidence="1">Belongs to the P-Pant transferase superfamily. AcpS family.</text>
</comment>
<reference key="1">
    <citation type="submission" date="2005-09" db="EMBL/GenBank/DDBJ databases">
        <title>Complete sequence of chromosome 1 of Rhodobacter sphaeroides 2.4.1.</title>
        <authorList>
            <person name="Copeland A."/>
            <person name="Lucas S."/>
            <person name="Lapidus A."/>
            <person name="Barry K."/>
            <person name="Detter J.C."/>
            <person name="Glavina T."/>
            <person name="Hammon N."/>
            <person name="Israni S."/>
            <person name="Pitluck S."/>
            <person name="Richardson P."/>
            <person name="Mackenzie C."/>
            <person name="Choudhary M."/>
            <person name="Larimer F."/>
            <person name="Hauser L.J."/>
            <person name="Land M."/>
            <person name="Donohue T.J."/>
            <person name="Kaplan S."/>
        </authorList>
    </citation>
    <scope>NUCLEOTIDE SEQUENCE [LARGE SCALE GENOMIC DNA]</scope>
    <source>
        <strain>ATCC 17023 / DSM 158 / JCM 6121 / CCUG 31486 / LMG 2827 / NBRC 12203 / NCIMB 8253 / ATH 2.4.1.</strain>
    </source>
</reference>
<name>ACPS_CERS4</name>
<feature type="chain" id="PRO_0000228299" description="Holo-[acyl-carrier-protein] synthase">
    <location>
        <begin position="1"/>
        <end position="137"/>
    </location>
</feature>
<feature type="binding site" evidence="1">
    <location>
        <position position="8"/>
    </location>
    <ligand>
        <name>Mg(2+)</name>
        <dbReference type="ChEBI" id="CHEBI:18420"/>
    </ligand>
</feature>
<feature type="binding site" evidence="1">
    <location>
        <position position="57"/>
    </location>
    <ligand>
        <name>Mg(2+)</name>
        <dbReference type="ChEBI" id="CHEBI:18420"/>
    </ligand>
</feature>
<proteinExistence type="inferred from homology"/>
<gene>
    <name evidence="1" type="primary">acpS</name>
    <name type="ordered locus">RHOS4_02530</name>
    <name type="ORF">RSP_1673</name>
</gene>
<protein>
    <recommendedName>
        <fullName evidence="1">Holo-[acyl-carrier-protein] synthase</fullName>
        <shortName evidence="1">Holo-ACP synthase</shortName>
        <ecNumber evidence="1">2.7.8.7</ecNumber>
    </recommendedName>
    <alternativeName>
        <fullName evidence="1">4'-phosphopantetheinyl transferase AcpS</fullName>
    </alternativeName>
</protein>
<dbReference type="EC" id="2.7.8.7" evidence="1"/>
<dbReference type="EMBL" id="CP000143">
    <property type="protein sequence ID" value="ABA77821.1"/>
    <property type="molecule type" value="Genomic_DNA"/>
</dbReference>
<dbReference type="RefSeq" id="WP_009561568.1">
    <property type="nucleotide sequence ID" value="NC_007493.2"/>
</dbReference>
<dbReference type="RefSeq" id="YP_351722.1">
    <property type="nucleotide sequence ID" value="NC_007493.2"/>
</dbReference>
<dbReference type="SMR" id="Q3J5W3"/>
<dbReference type="STRING" id="272943.RSP_1673"/>
<dbReference type="EnsemblBacteria" id="ABA77821">
    <property type="protein sequence ID" value="ABA77821"/>
    <property type="gene ID" value="RSP_1673"/>
</dbReference>
<dbReference type="GeneID" id="3717939"/>
<dbReference type="KEGG" id="rsp:RSP_1673"/>
<dbReference type="PATRIC" id="fig|272943.9.peg.550"/>
<dbReference type="eggNOG" id="COG0736">
    <property type="taxonomic scope" value="Bacteria"/>
</dbReference>
<dbReference type="OrthoDB" id="517356at2"/>
<dbReference type="PhylomeDB" id="Q3J5W3"/>
<dbReference type="Proteomes" id="UP000002703">
    <property type="component" value="Chromosome 1"/>
</dbReference>
<dbReference type="GO" id="GO:0005737">
    <property type="term" value="C:cytoplasm"/>
    <property type="evidence" value="ECO:0007669"/>
    <property type="project" value="UniProtKB-SubCell"/>
</dbReference>
<dbReference type="GO" id="GO:0008897">
    <property type="term" value="F:holo-[acyl-carrier-protein] synthase activity"/>
    <property type="evidence" value="ECO:0007669"/>
    <property type="project" value="UniProtKB-UniRule"/>
</dbReference>
<dbReference type="GO" id="GO:0000287">
    <property type="term" value="F:magnesium ion binding"/>
    <property type="evidence" value="ECO:0007669"/>
    <property type="project" value="UniProtKB-UniRule"/>
</dbReference>
<dbReference type="GO" id="GO:0006633">
    <property type="term" value="P:fatty acid biosynthetic process"/>
    <property type="evidence" value="ECO:0007669"/>
    <property type="project" value="UniProtKB-UniRule"/>
</dbReference>
<dbReference type="Gene3D" id="3.90.470.20">
    <property type="entry name" value="4'-phosphopantetheinyl transferase domain"/>
    <property type="match status" value="1"/>
</dbReference>
<dbReference type="HAMAP" id="MF_00101">
    <property type="entry name" value="AcpS"/>
    <property type="match status" value="1"/>
</dbReference>
<dbReference type="InterPro" id="IPR008278">
    <property type="entry name" value="4-PPantetheinyl_Trfase_dom"/>
</dbReference>
<dbReference type="InterPro" id="IPR037143">
    <property type="entry name" value="4-PPantetheinyl_Trfase_dom_sf"/>
</dbReference>
<dbReference type="InterPro" id="IPR002582">
    <property type="entry name" value="ACPS"/>
</dbReference>
<dbReference type="InterPro" id="IPR004568">
    <property type="entry name" value="Ppantetheine-prot_Trfase_dom"/>
</dbReference>
<dbReference type="NCBIfam" id="TIGR00516">
    <property type="entry name" value="acpS"/>
    <property type="match status" value="1"/>
</dbReference>
<dbReference type="NCBIfam" id="TIGR00556">
    <property type="entry name" value="pantethn_trn"/>
    <property type="match status" value="1"/>
</dbReference>
<dbReference type="Pfam" id="PF01648">
    <property type="entry name" value="ACPS"/>
    <property type="match status" value="1"/>
</dbReference>
<dbReference type="SUPFAM" id="SSF56214">
    <property type="entry name" value="4'-phosphopantetheinyl transferase"/>
    <property type="match status" value="1"/>
</dbReference>
<organism>
    <name type="scientific">Cereibacter sphaeroides (strain ATCC 17023 / DSM 158 / JCM 6121 / CCUG 31486 / LMG 2827 / NBRC 12203 / NCIMB 8253 / ATH 2.4.1.)</name>
    <name type="common">Rhodobacter sphaeroides</name>
    <dbReference type="NCBI Taxonomy" id="272943"/>
    <lineage>
        <taxon>Bacteria</taxon>
        <taxon>Pseudomonadati</taxon>
        <taxon>Pseudomonadota</taxon>
        <taxon>Alphaproteobacteria</taxon>
        <taxon>Rhodobacterales</taxon>
        <taxon>Paracoccaceae</taxon>
        <taxon>Cereibacter</taxon>
    </lineage>
</organism>
<evidence type="ECO:0000255" key="1">
    <source>
        <dbReference type="HAMAP-Rule" id="MF_00101"/>
    </source>
</evidence>
<sequence length="137" mass="15025">MILGIGTDLANIDRMEKTLARFGERFRNRVFTPLEQAKAERRADVAGTYAKRWAAKEACSKALGTGLRMGIAWKDMSVANLETGQPVMRLTGWAAERLASMTPPGHEAVVHVSLTDDHPWAQAFVVIEARPRAAPPA</sequence>
<keyword id="KW-0963">Cytoplasm</keyword>
<keyword id="KW-0275">Fatty acid biosynthesis</keyword>
<keyword id="KW-0276">Fatty acid metabolism</keyword>
<keyword id="KW-0444">Lipid biosynthesis</keyword>
<keyword id="KW-0443">Lipid metabolism</keyword>
<keyword id="KW-0460">Magnesium</keyword>
<keyword id="KW-0479">Metal-binding</keyword>
<keyword id="KW-1185">Reference proteome</keyword>
<keyword id="KW-0808">Transferase</keyword>